<dbReference type="EMBL" id="AJ243755">
    <property type="protein sequence ID" value="CAC42919.1"/>
    <property type="molecule type" value="Genomic_DNA"/>
</dbReference>
<dbReference type="RefSeq" id="WP_011033712.1">
    <property type="nucleotide sequence ID" value="NZ_JJRB01000066.1"/>
</dbReference>
<dbReference type="SMR" id="P0CW14"/>
<dbReference type="IntAct" id="P0CW14">
    <property type="interactions" value="1"/>
</dbReference>
<dbReference type="MINT" id="P0CW14"/>
<dbReference type="OMA" id="DHDQRMK"/>
<dbReference type="OrthoDB" id="7429at2157"/>
<dbReference type="GO" id="GO:0097550">
    <property type="term" value="C:transcription preinitiation complex"/>
    <property type="evidence" value="ECO:0007669"/>
    <property type="project" value="TreeGrafter"/>
</dbReference>
<dbReference type="GO" id="GO:0003700">
    <property type="term" value="F:DNA-binding transcription factor activity"/>
    <property type="evidence" value="ECO:0007669"/>
    <property type="project" value="UniProtKB-UniRule"/>
</dbReference>
<dbReference type="GO" id="GO:0017025">
    <property type="term" value="F:TBP-class protein binding"/>
    <property type="evidence" value="ECO:0007669"/>
    <property type="project" value="InterPro"/>
</dbReference>
<dbReference type="GO" id="GO:0008270">
    <property type="term" value="F:zinc ion binding"/>
    <property type="evidence" value="ECO:0007669"/>
    <property type="project" value="UniProtKB-UniRule"/>
</dbReference>
<dbReference type="GO" id="GO:0070897">
    <property type="term" value="P:transcription preinitiation complex assembly"/>
    <property type="evidence" value="ECO:0007669"/>
    <property type="project" value="InterPro"/>
</dbReference>
<dbReference type="CDD" id="cd20549">
    <property type="entry name" value="CYCLIN_TFIIB_archaea_like_rpt1"/>
    <property type="match status" value="1"/>
</dbReference>
<dbReference type="CDD" id="cd20550">
    <property type="entry name" value="CYCLIN_TFIIB_archaea_like_rpt2"/>
    <property type="match status" value="1"/>
</dbReference>
<dbReference type="FunFam" id="1.10.472.10:FF:000023">
    <property type="entry name" value="Transcription initiation factor IIB"/>
    <property type="match status" value="1"/>
</dbReference>
<dbReference type="FunFam" id="1.10.472.170:FF:000001">
    <property type="entry name" value="Transcription initiation factor IIB"/>
    <property type="match status" value="1"/>
</dbReference>
<dbReference type="Gene3D" id="1.10.472.170">
    <property type="match status" value="1"/>
</dbReference>
<dbReference type="Gene3D" id="1.10.472.10">
    <property type="entry name" value="Cyclin-like"/>
    <property type="match status" value="1"/>
</dbReference>
<dbReference type="HAMAP" id="MF_00383">
    <property type="entry name" value="TF2B_arch"/>
    <property type="match status" value="1"/>
</dbReference>
<dbReference type="InterPro" id="IPR013763">
    <property type="entry name" value="Cyclin-like_dom"/>
</dbReference>
<dbReference type="InterPro" id="IPR036915">
    <property type="entry name" value="Cyclin-like_sf"/>
</dbReference>
<dbReference type="InterPro" id="IPR000812">
    <property type="entry name" value="TFIIB"/>
</dbReference>
<dbReference type="InterPro" id="IPR023484">
    <property type="entry name" value="TFIIB_arc"/>
</dbReference>
<dbReference type="InterPro" id="IPR023486">
    <property type="entry name" value="TFIIB_CS"/>
</dbReference>
<dbReference type="InterPro" id="IPR013150">
    <property type="entry name" value="TFIIB_cyclin"/>
</dbReference>
<dbReference type="InterPro" id="IPR013137">
    <property type="entry name" value="Znf_TFIIB"/>
</dbReference>
<dbReference type="NCBIfam" id="NF001658">
    <property type="entry name" value="PRK00423.1"/>
    <property type="match status" value="1"/>
</dbReference>
<dbReference type="PANTHER" id="PTHR11618:SF13">
    <property type="entry name" value="TRANSCRIPTION INITIATION FACTOR IIB"/>
    <property type="match status" value="1"/>
</dbReference>
<dbReference type="PANTHER" id="PTHR11618">
    <property type="entry name" value="TRANSCRIPTION INITIATION FACTOR IIB-RELATED"/>
    <property type="match status" value="1"/>
</dbReference>
<dbReference type="Pfam" id="PF00382">
    <property type="entry name" value="TFIIB"/>
    <property type="match status" value="2"/>
</dbReference>
<dbReference type="Pfam" id="PF08271">
    <property type="entry name" value="Zn_Ribbon_TF"/>
    <property type="match status" value="1"/>
</dbReference>
<dbReference type="PRINTS" id="PR00685">
    <property type="entry name" value="TIFACTORIIB"/>
</dbReference>
<dbReference type="SMART" id="SM00385">
    <property type="entry name" value="CYCLIN"/>
    <property type="match status" value="2"/>
</dbReference>
<dbReference type="SUPFAM" id="SSF47954">
    <property type="entry name" value="Cyclin-like"/>
    <property type="match status" value="2"/>
</dbReference>
<dbReference type="SUPFAM" id="SSF57783">
    <property type="entry name" value="Zinc beta-ribbon"/>
    <property type="match status" value="1"/>
</dbReference>
<dbReference type="PROSITE" id="PS00782">
    <property type="entry name" value="TFIIB"/>
    <property type="match status" value="2"/>
</dbReference>
<dbReference type="PROSITE" id="PS51134">
    <property type="entry name" value="ZF_TFIIB"/>
    <property type="match status" value="1"/>
</dbReference>
<reference key="1">
    <citation type="journal article" date="2001" name="J. Mol. Biol.">
        <title>The basal transcription factors TBP and TFB from the mesophilic archaeon Methanosarcina mazeii; structure and conformational changes upon interaction with stress-gene promoters.</title>
        <authorList>
            <person name="Thomsen J."/>
            <person name="de Biase A."/>
            <person name="Kaczanowski S."/>
            <person name="Macario A.J.L."/>
            <person name="Thomm M."/>
            <person name="Zielenkiewicz P."/>
            <person name="MacColl R."/>
            <person name="Conway de Macario E."/>
        </authorList>
    </citation>
    <scope>NUCLEOTIDE SEQUENCE [GENOMIC DNA]</scope>
    <source>
        <strain>S-6</strain>
    </source>
</reference>
<evidence type="ECO:0000255" key="1">
    <source>
        <dbReference type="HAMAP-Rule" id="MF_00383"/>
    </source>
</evidence>
<evidence type="ECO:0000255" key="2">
    <source>
        <dbReference type="PROSITE-ProRule" id="PRU00469"/>
    </source>
</evidence>
<name>TF2B_METMZ</name>
<sequence length="337" mass="38290">MVEVERVRYSDTLEREKIRAMIKARKEKQKEQTVENEKAVCPECGSRNLVHDYERAELVCGDCGLVIDADFVDEGPEWRAFDHDQRMKRSRVGAPMTYTIHDKGLSTMIDWRNRDSYGKSISSKNRAQLYRLRKWQRRIRVSNATERNLAFALSELDRMASALGLPRTVRETAAVVYRKAVDKNLIRGRSIEGVAAAALYAACRQCSVPRTLDEIEEVSRVSRKEIGRTYRFISRELALKLMPTSPIDYVPRFCSGLNLKGEVQSKSVEILRQASEKELTSGRGPTGVAAAAIYIASILCGERRTQREVADVAGVTEVTIRNRYKELAEELDIEIIL</sequence>
<proteinExistence type="inferred from homology"/>
<organism>
    <name type="scientific">Methanosarcina mazei</name>
    <name type="common">Methanosarcina frisia</name>
    <dbReference type="NCBI Taxonomy" id="2209"/>
    <lineage>
        <taxon>Archaea</taxon>
        <taxon>Methanobacteriati</taxon>
        <taxon>Methanobacteriota</taxon>
        <taxon>Stenosarchaea group</taxon>
        <taxon>Methanomicrobia</taxon>
        <taxon>Methanosarcinales</taxon>
        <taxon>Methanosarcinaceae</taxon>
        <taxon>Methanosarcina</taxon>
    </lineage>
</organism>
<gene>
    <name evidence="1" type="primary">tfb</name>
</gene>
<protein>
    <recommendedName>
        <fullName evidence="1">Transcription initiation factor IIB</fullName>
        <shortName evidence="1">TFIIB</shortName>
    </recommendedName>
</protein>
<comment type="function">
    <text evidence="1">Stabilizes TBP binding to an archaeal box-A promoter. Also responsible for recruiting RNA polymerase II to the pre-initiation complex (DNA-TBP-TFIIB).</text>
</comment>
<comment type="similarity">
    <text evidence="1">Belongs to the TFIIB family.</text>
</comment>
<keyword id="KW-0479">Metal-binding</keyword>
<keyword id="KW-0677">Repeat</keyword>
<keyword id="KW-0804">Transcription</keyword>
<keyword id="KW-0805">Transcription regulation</keyword>
<keyword id="KW-0862">Zinc</keyword>
<keyword id="KW-0863">Zinc-finger</keyword>
<feature type="chain" id="PRO_0000119322" description="Transcription initiation factor IIB">
    <location>
        <begin position="1"/>
        <end position="337"/>
    </location>
</feature>
<feature type="repeat" description="1">
    <location>
        <begin position="154"/>
        <end position="237"/>
    </location>
</feature>
<feature type="repeat" description="2">
    <location>
        <begin position="248"/>
        <end position="329"/>
    </location>
</feature>
<feature type="zinc finger region" description="TFIIB-type" evidence="2">
    <location>
        <begin position="37"/>
        <end position="68"/>
    </location>
</feature>
<feature type="binding site" evidence="2">
    <location>
        <position position="41"/>
    </location>
    <ligand>
        <name>Zn(2+)</name>
        <dbReference type="ChEBI" id="CHEBI:29105"/>
    </ligand>
</feature>
<feature type="binding site" evidence="2">
    <location>
        <position position="44"/>
    </location>
    <ligand>
        <name>Zn(2+)</name>
        <dbReference type="ChEBI" id="CHEBI:29105"/>
    </ligand>
</feature>
<feature type="binding site" evidence="2">
    <location>
        <position position="60"/>
    </location>
    <ligand>
        <name>Zn(2+)</name>
        <dbReference type="ChEBI" id="CHEBI:29105"/>
    </ligand>
</feature>
<feature type="binding site" evidence="2">
    <location>
        <position position="63"/>
    </location>
    <ligand>
        <name>Zn(2+)</name>
        <dbReference type="ChEBI" id="CHEBI:29105"/>
    </ligand>
</feature>
<accession>P0CW14</accession>
<accession>Q977U3</accession>